<accession>P32867</accession>
<accession>D6W3D8</accession>
<proteinExistence type="evidence at protein level"/>
<name>SSO1_YEAST</name>
<comment type="function">
    <text>Required for vesicle fusion with the plasma membrane.</text>
</comment>
<comment type="interaction">
    <interactant intactId="EBI-2206525">
        <id>P32867</id>
    </interactant>
    <interactant intactId="EBI-16577">
        <id>P22214</id>
        <label>SEC22</label>
    </interactant>
    <organismsDiffer>false</organismsDiffer>
    <experiments>2</experiments>
</comment>
<comment type="interaction">
    <interactant intactId="EBI-2206525">
        <id>P32867</id>
    </interactant>
    <interactant intactId="EBI-16904">
        <id>P40357</id>
        <label>SEC9</label>
    </interactant>
    <organismsDiffer>false</organismsDiffer>
    <experiments>14</experiments>
</comment>
<comment type="interaction">
    <interactant intactId="EBI-2206525">
        <id>P32867</id>
    </interactant>
    <interactant intactId="EBI-17512">
        <id>P33328</id>
        <label>SNC2</label>
    </interactant>
    <organismsDiffer>false</organismsDiffer>
    <experiments>2</experiments>
</comment>
<comment type="subcellular location">
    <subcellularLocation>
        <location evidence="4">Membrane</location>
        <topology evidence="4">Single-pass type IV membrane protein</topology>
    </subcellularLocation>
</comment>
<comment type="miscellaneous">
    <text evidence="3">Present with 450 molecules/cell in log phase SD medium.</text>
</comment>
<comment type="similarity">
    <text evidence="4">Belongs to the syntaxin family.</text>
</comment>
<organism>
    <name type="scientific">Saccharomyces cerevisiae (strain ATCC 204508 / S288c)</name>
    <name type="common">Baker's yeast</name>
    <dbReference type="NCBI Taxonomy" id="559292"/>
    <lineage>
        <taxon>Eukaryota</taxon>
        <taxon>Fungi</taxon>
        <taxon>Dikarya</taxon>
        <taxon>Ascomycota</taxon>
        <taxon>Saccharomycotina</taxon>
        <taxon>Saccharomycetes</taxon>
        <taxon>Saccharomycetales</taxon>
        <taxon>Saccharomycetaceae</taxon>
        <taxon>Saccharomyces</taxon>
    </lineage>
</organism>
<evidence type="ECO:0000255" key="1"/>
<evidence type="ECO:0000255" key="2">
    <source>
        <dbReference type="PROSITE-ProRule" id="PRU00202"/>
    </source>
</evidence>
<evidence type="ECO:0000269" key="3">
    <source>
    </source>
</evidence>
<evidence type="ECO:0000305" key="4"/>
<evidence type="ECO:0007829" key="5">
    <source>
        <dbReference type="PDB" id="1FIO"/>
    </source>
</evidence>
<evidence type="ECO:0007829" key="6">
    <source>
        <dbReference type="PDB" id="3B5N"/>
    </source>
</evidence>
<sequence>MSYNNPYQLETPFEESYELDEGSSAIGAEGHDFVGFMNKISQINRDLDKYDHTINQVDSLHKRLLTEVNEEQASHLRHSLDNFVAQATDLQFKLKNEIKSAQRDGIHDTNKQAQAENSRQRFLKLIQDYRIVDSNYKEENKEQAKRQYMIIQPEATEDEVEAAISDVGGQQIFSQALLNANRRGEAKTALAEVQARHQELLKLEKSMAELTQLFNDMEELVIEQQENVDVIDKNVEDAQLDVEQGVGHTDKAVKSARKARKNKIRCWLIVFAIIVVVVVVVVVPAVVKTR</sequence>
<reference key="1">
    <citation type="journal article" date="1993" name="EMBO J.">
        <title>Yeast syntaxins Sso1p and Sso2p belong to a family of related membrane proteins that function in vesicular transport.</title>
        <authorList>
            <person name="Aalto M.K."/>
            <person name="Ronne H."/>
            <person name="Keraenen S."/>
        </authorList>
    </citation>
    <scope>NUCLEOTIDE SEQUENCE</scope>
    <source>
        <strain>ATCC 26787 / X2180-1B</strain>
    </source>
</reference>
<reference key="2">
    <citation type="submission" date="1994-01" db="EMBL/GenBank/DDBJ databases">
        <authorList>
            <person name="Schueller H.-J."/>
        </authorList>
    </citation>
    <scope>NUCLEOTIDE SEQUENCE [GENOMIC DNA]</scope>
    <source>
        <strain>ATCC 26786 / X2180-1A</strain>
    </source>
</reference>
<reference key="3">
    <citation type="journal article" date="1997" name="Nature">
        <title>The nucleotide sequence of Saccharomyces cerevisiae chromosome XVI.</title>
        <authorList>
            <person name="Bussey H."/>
            <person name="Storms R.K."/>
            <person name="Ahmed A."/>
            <person name="Albermann K."/>
            <person name="Allen E."/>
            <person name="Ansorge W."/>
            <person name="Araujo R."/>
            <person name="Aparicio A."/>
            <person name="Barrell B.G."/>
            <person name="Badcock K."/>
            <person name="Benes V."/>
            <person name="Botstein D."/>
            <person name="Bowman S."/>
            <person name="Brueckner M."/>
            <person name="Carpenter J."/>
            <person name="Cherry J.M."/>
            <person name="Chung E."/>
            <person name="Churcher C.M."/>
            <person name="Coster F."/>
            <person name="Davis K."/>
            <person name="Davis R.W."/>
            <person name="Dietrich F.S."/>
            <person name="Delius H."/>
            <person name="DiPaolo T."/>
            <person name="Dubois E."/>
            <person name="Duesterhoeft A."/>
            <person name="Duncan M."/>
            <person name="Floeth M."/>
            <person name="Fortin N."/>
            <person name="Friesen J.D."/>
            <person name="Fritz C."/>
            <person name="Goffeau A."/>
            <person name="Hall J."/>
            <person name="Hebling U."/>
            <person name="Heumann K."/>
            <person name="Hilbert H."/>
            <person name="Hillier L.W."/>
            <person name="Hunicke-Smith S."/>
            <person name="Hyman R.W."/>
            <person name="Johnston M."/>
            <person name="Kalman S."/>
            <person name="Kleine K."/>
            <person name="Komp C."/>
            <person name="Kurdi O."/>
            <person name="Lashkari D."/>
            <person name="Lew H."/>
            <person name="Lin A."/>
            <person name="Lin D."/>
            <person name="Louis E.J."/>
            <person name="Marathe R."/>
            <person name="Messenguy F."/>
            <person name="Mewes H.-W."/>
            <person name="Mirtipati S."/>
            <person name="Moestl D."/>
            <person name="Mueller-Auer S."/>
            <person name="Namath A."/>
            <person name="Nentwich U."/>
            <person name="Oefner P."/>
            <person name="Pearson D."/>
            <person name="Petel F.X."/>
            <person name="Pohl T.M."/>
            <person name="Purnelle B."/>
            <person name="Rajandream M.A."/>
            <person name="Rechmann S."/>
            <person name="Rieger M."/>
            <person name="Riles L."/>
            <person name="Roberts D."/>
            <person name="Schaefer M."/>
            <person name="Scharfe M."/>
            <person name="Scherens B."/>
            <person name="Schramm S."/>
            <person name="Schroeder M."/>
            <person name="Sdicu A.-M."/>
            <person name="Tettelin H."/>
            <person name="Urrestarazu L.A."/>
            <person name="Ushinsky S."/>
            <person name="Vierendeels F."/>
            <person name="Vissers S."/>
            <person name="Voss H."/>
            <person name="Walsh S.V."/>
            <person name="Wambutt R."/>
            <person name="Wang Y."/>
            <person name="Wedler E."/>
            <person name="Wedler H."/>
            <person name="Winnett E."/>
            <person name="Zhong W.-W."/>
            <person name="Zollner A."/>
            <person name="Vo D.H."/>
            <person name="Hani J."/>
        </authorList>
    </citation>
    <scope>NUCLEOTIDE SEQUENCE [LARGE SCALE GENOMIC DNA]</scope>
    <source>
        <strain>ATCC 204508 / S288c</strain>
    </source>
</reference>
<reference key="4">
    <citation type="journal article" date="2014" name="G3 (Bethesda)">
        <title>The reference genome sequence of Saccharomyces cerevisiae: Then and now.</title>
        <authorList>
            <person name="Engel S.R."/>
            <person name="Dietrich F.S."/>
            <person name="Fisk D.G."/>
            <person name="Binkley G."/>
            <person name="Balakrishnan R."/>
            <person name="Costanzo M.C."/>
            <person name="Dwight S.S."/>
            <person name="Hitz B.C."/>
            <person name="Karra K."/>
            <person name="Nash R.S."/>
            <person name="Weng S."/>
            <person name="Wong E.D."/>
            <person name="Lloyd P."/>
            <person name="Skrzypek M.S."/>
            <person name="Miyasato S.R."/>
            <person name="Simison M."/>
            <person name="Cherry J.M."/>
        </authorList>
    </citation>
    <scope>GENOME REANNOTATION</scope>
    <source>
        <strain>ATCC 204508 / S288c</strain>
    </source>
</reference>
<reference key="5">
    <citation type="journal article" date="1988" name="J. Biol. Chem.">
        <title>Primary structure of the multifunctional alpha subunit protein of yeast fatty acid synthase derived from FAS2 gene sequence.</title>
        <authorList>
            <person name="Mohamed A.H."/>
            <person name="Chirala S.S."/>
            <person name="Mody N.H."/>
            <person name="Huang W.Y."/>
            <person name="Wakil S.J."/>
        </authorList>
    </citation>
    <scope>PARTIAL NUCLEOTIDE SEQUENCE [GENOMIC DNA]</scope>
</reference>
<reference key="6">
    <citation type="journal article" date="2003" name="Nature">
        <title>Global analysis of protein expression in yeast.</title>
        <authorList>
            <person name="Ghaemmaghami S."/>
            <person name="Huh W.-K."/>
            <person name="Bower K."/>
            <person name="Howson R.W."/>
            <person name="Belle A."/>
            <person name="Dephoure N."/>
            <person name="O'Shea E.K."/>
            <person name="Weissman J.S."/>
        </authorList>
    </citation>
    <scope>LEVEL OF PROTEIN EXPRESSION [LARGE SCALE ANALYSIS]</scope>
</reference>
<reference key="7">
    <citation type="journal article" date="2008" name="Mol. Cell. Proteomics">
        <title>A multidimensional chromatography technology for in-depth phosphoproteome analysis.</title>
        <authorList>
            <person name="Albuquerque C.P."/>
            <person name="Smolka M.B."/>
            <person name="Payne S.H."/>
            <person name="Bafna V."/>
            <person name="Eng J."/>
            <person name="Zhou H."/>
        </authorList>
    </citation>
    <scope>IDENTIFICATION BY MASS SPECTROMETRY [LARGE SCALE ANALYSIS]</scope>
</reference>
<reference key="8">
    <citation type="journal article" date="2009" name="Science">
        <title>Global analysis of Cdk1 substrate phosphorylation sites provides insights into evolution.</title>
        <authorList>
            <person name="Holt L.J."/>
            <person name="Tuch B.B."/>
            <person name="Villen J."/>
            <person name="Johnson A.D."/>
            <person name="Gygi S.P."/>
            <person name="Morgan D.O."/>
        </authorList>
    </citation>
    <scope>IDENTIFICATION BY MASS SPECTROMETRY [LARGE SCALE ANALYSIS]</scope>
</reference>
<dbReference type="EMBL" id="X67729">
    <property type="protein sequence ID" value="CAA47959.1"/>
    <property type="molecule type" value="mRNA"/>
</dbReference>
<dbReference type="EMBL" id="X76890">
    <property type="protein sequence ID" value="CAA54217.1"/>
    <property type="molecule type" value="Genomic_DNA"/>
</dbReference>
<dbReference type="EMBL" id="X94561">
    <property type="protein sequence ID" value="CAA64255.1"/>
    <property type="molecule type" value="Genomic_DNA"/>
</dbReference>
<dbReference type="EMBL" id="Z73588">
    <property type="protein sequence ID" value="CAA97949.1"/>
    <property type="molecule type" value="Genomic_DNA"/>
</dbReference>
<dbReference type="EMBL" id="J03936">
    <property type="status" value="NOT_ANNOTATED_CDS"/>
    <property type="molecule type" value="Genomic_DNA"/>
</dbReference>
<dbReference type="EMBL" id="BK006949">
    <property type="protein sequence ID" value="DAA11204.1"/>
    <property type="molecule type" value="Genomic_DNA"/>
</dbReference>
<dbReference type="PIR" id="S39569">
    <property type="entry name" value="S39569"/>
</dbReference>
<dbReference type="RefSeq" id="NP_015092.1">
    <property type="nucleotide sequence ID" value="NM_001184046.1"/>
</dbReference>
<dbReference type="PDB" id="1FIO">
    <property type="method" value="X-ray"/>
    <property type="resolution" value="2.10 A"/>
    <property type="chains" value="A=31-225"/>
</dbReference>
<dbReference type="PDB" id="3B5N">
    <property type="method" value="X-ray"/>
    <property type="resolution" value="1.60 A"/>
    <property type="chains" value="B/F/J=189-257"/>
</dbReference>
<dbReference type="PDBsum" id="1FIO"/>
<dbReference type="PDBsum" id="3B5N"/>
<dbReference type="BMRB" id="P32867"/>
<dbReference type="SMR" id="P32867"/>
<dbReference type="BioGRID" id="35930">
    <property type="interactions" value="153"/>
</dbReference>
<dbReference type="ComplexPortal" id="CPX-1365">
    <property type="entry name" value="Vesicular SNARE complex SSO1-SEC9-SNC1"/>
</dbReference>
<dbReference type="ComplexPortal" id="CPX-5463">
    <property type="entry name" value="Vesicular SNARE complex SSO1-SEC9-SNC2"/>
</dbReference>
<dbReference type="ComplexPortal" id="CPX-5464">
    <property type="entry name" value="Vesicular SNARE complex SSO1-SPO20-SNC1"/>
</dbReference>
<dbReference type="ComplexPortal" id="CPX-5466">
    <property type="entry name" value="Vesicular SNARE complex SSO1-SPO20-SNC2"/>
</dbReference>
<dbReference type="ComplexPortal" id="CPX-5521">
    <property type="entry name" value="Vacuolar SNARE complex SSO1-SEC9-NYV1"/>
</dbReference>
<dbReference type="DIP" id="DIP-2494N"/>
<dbReference type="FunCoup" id="P32867">
    <property type="interactions" value="664"/>
</dbReference>
<dbReference type="IntAct" id="P32867">
    <property type="interactions" value="14"/>
</dbReference>
<dbReference type="STRING" id="4932.YPL232W"/>
<dbReference type="TCDB" id="8.A.91.1.5">
    <property type="family name" value="the syntaxin (syntaxin) family"/>
</dbReference>
<dbReference type="iPTMnet" id="P32867"/>
<dbReference type="SwissPalm" id="P32867"/>
<dbReference type="PaxDb" id="4932-YPL232W"/>
<dbReference type="PeptideAtlas" id="P32867"/>
<dbReference type="EnsemblFungi" id="YPL232W_mRNA">
    <property type="protein sequence ID" value="YPL232W"/>
    <property type="gene ID" value="YPL232W"/>
</dbReference>
<dbReference type="GeneID" id="855844"/>
<dbReference type="KEGG" id="sce:YPL232W"/>
<dbReference type="AGR" id="SGD:S000006153"/>
<dbReference type="SGD" id="S000006153">
    <property type="gene designation" value="SSO1"/>
</dbReference>
<dbReference type="VEuPathDB" id="FungiDB:YPL232W"/>
<dbReference type="eggNOG" id="KOG0810">
    <property type="taxonomic scope" value="Eukaryota"/>
</dbReference>
<dbReference type="GeneTree" id="ENSGT01000000214440"/>
<dbReference type="HOGENOM" id="CLU_042423_0_1_1"/>
<dbReference type="InParanoid" id="P32867"/>
<dbReference type="OMA" id="HPRNAPQ"/>
<dbReference type="OrthoDB" id="10255013at2759"/>
<dbReference type="BioCyc" id="YEAST:G3O-34119-MONOMER"/>
<dbReference type="Reactome" id="R-SCE-114516">
    <property type="pathway name" value="Disinhibition of SNARE formation"/>
</dbReference>
<dbReference type="Reactome" id="R-SCE-199992">
    <property type="pathway name" value="trans-Golgi Network Vesicle Budding"/>
</dbReference>
<dbReference type="BioGRID-ORCS" id="855844">
    <property type="hits" value="0 hits in 10 CRISPR screens"/>
</dbReference>
<dbReference type="EvolutionaryTrace" id="P32867"/>
<dbReference type="PRO" id="PR:P32867"/>
<dbReference type="Proteomes" id="UP000002311">
    <property type="component" value="Chromosome XVI"/>
</dbReference>
<dbReference type="RNAct" id="P32867">
    <property type="molecule type" value="protein"/>
</dbReference>
<dbReference type="GO" id="GO:0071944">
    <property type="term" value="C:cell periphery"/>
    <property type="evidence" value="ECO:0007005"/>
    <property type="project" value="SGD"/>
</dbReference>
<dbReference type="GO" id="GO:0012505">
    <property type="term" value="C:endomembrane system"/>
    <property type="evidence" value="ECO:0000318"/>
    <property type="project" value="GO_Central"/>
</dbReference>
<dbReference type="GO" id="GO:0000329">
    <property type="term" value="C:fungal-type vacuole membrane"/>
    <property type="evidence" value="ECO:0000314"/>
    <property type="project" value="SGD"/>
</dbReference>
<dbReference type="GO" id="GO:0000139">
    <property type="term" value="C:Golgi membrane"/>
    <property type="evidence" value="ECO:0000303"/>
    <property type="project" value="ComplexPortal"/>
</dbReference>
<dbReference type="GO" id="GO:0005886">
    <property type="term" value="C:plasma membrane"/>
    <property type="evidence" value="ECO:0000314"/>
    <property type="project" value="SGD"/>
</dbReference>
<dbReference type="GO" id="GO:0005628">
    <property type="term" value="C:prospore membrane"/>
    <property type="evidence" value="ECO:0000314"/>
    <property type="project" value="SGD"/>
</dbReference>
<dbReference type="GO" id="GO:0031201">
    <property type="term" value="C:SNARE complex"/>
    <property type="evidence" value="ECO:0000314"/>
    <property type="project" value="ComplexPortal"/>
</dbReference>
<dbReference type="GO" id="GO:0070300">
    <property type="term" value="F:phosphatidic acid binding"/>
    <property type="evidence" value="ECO:0000314"/>
    <property type="project" value="SGD"/>
</dbReference>
<dbReference type="GO" id="GO:0043325">
    <property type="term" value="F:phosphatidylinositol-3,4-bisphosphate binding"/>
    <property type="evidence" value="ECO:0000314"/>
    <property type="project" value="SGD"/>
</dbReference>
<dbReference type="GO" id="GO:0080025">
    <property type="term" value="F:phosphatidylinositol-3,5-bisphosphate binding"/>
    <property type="evidence" value="ECO:0000314"/>
    <property type="project" value="SGD"/>
</dbReference>
<dbReference type="GO" id="GO:0005546">
    <property type="term" value="F:phosphatidylinositol-4,5-bisphosphate binding"/>
    <property type="evidence" value="ECO:0000314"/>
    <property type="project" value="SGD"/>
</dbReference>
<dbReference type="GO" id="GO:0005484">
    <property type="term" value="F:SNAP receptor activity"/>
    <property type="evidence" value="ECO:0000314"/>
    <property type="project" value="SGD"/>
</dbReference>
<dbReference type="GO" id="GO:0000149">
    <property type="term" value="F:SNARE binding"/>
    <property type="evidence" value="ECO:0000353"/>
    <property type="project" value="CAFA"/>
</dbReference>
<dbReference type="GO" id="GO:0030437">
    <property type="term" value="P:ascospore formation"/>
    <property type="evidence" value="ECO:0000315"/>
    <property type="project" value="SGD"/>
</dbReference>
<dbReference type="GO" id="GO:0031321">
    <property type="term" value="P:ascospore-type prospore assembly"/>
    <property type="evidence" value="ECO:0000315"/>
    <property type="project" value="SGD"/>
</dbReference>
<dbReference type="GO" id="GO:0006887">
    <property type="term" value="P:exocytosis"/>
    <property type="evidence" value="ECO:0000318"/>
    <property type="project" value="GO_Central"/>
</dbReference>
<dbReference type="GO" id="GO:0006893">
    <property type="term" value="P:Golgi to plasma membrane transport"/>
    <property type="evidence" value="ECO:0000303"/>
    <property type="project" value="ComplexPortal"/>
</dbReference>
<dbReference type="GO" id="GO:0048210">
    <property type="term" value="P:Golgi vesicle fusion to target membrane"/>
    <property type="evidence" value="ECO:0000303"/>
    <property type="project" value="ComplexPortal"/>
</dbReference>
<dbReference type="GO" id="GO:0006886">
    <property type="term" value="P:intracellular protein transport"/>
    <property type="evidence" value="ECO:0000318"/>
    <property type="project" value="GO_Central"/>
</dbReference>
<dbReference type="GO" id="GO:0035493">
    <property type="term" value="P:SNARE complex assembly"/>
    <property type="evidence" value="ECO:0000315"/>
    <property type="project" value="CAFA"/>
</dbReference>
<dbReference type="GO" id="GO:0043934">
    <property type="term" value="P:sporulation"/>
    <property type="evidence" value="ECO:0000314"/>
    <property type="project" value="ComplexPortal"/>
</dbReference>
<dbReference type="GO" id="GO:0048278">
    <property type="term" value="P:vesicle docking"/>
    <property type="evidence" value="ECO:0000318"/>
    <property type="project" value="GO_Central"/>
</dbReference>
<dbReference type="GO" id="GO:0006906">
    <property type="term" value="P:vesicle fusion"/>
    <property type="evidence" value="ECO:0000314"/>
    <property type="project" value="ComplexPortal"/>
</dbReference>
<dbReference type="GO" id="GO:0099500">
    <property type="term" value="P:vesicle fusion to plasma membrane"/>
    <property type="evidence" value="ECO:0000303"/>
    <property type="project" value="ComplexPortal"/>
</dbReference>
<dbReference type="CDD" id="cd15849">
    <property type="entry name" value="SNARE_Sso1"/>
    <property type="match status" value="1"/>
</dbReference>
<dbReference type="CDD" id="cd00179">
    <property type="entry name" value="SynN"/>
    <property type="match status" value="1"/>
</dbReference>
<dbReference type="DisProt" id="DP01503"/>
<dbReference type="FunFam" id="1.20.58.70:FF:000008">
    <property type="entry name" value="Syntaxin family protein"/>
    <property type="match status" value="1"/>
</dbReference>
<dbReference type="Gene3D" id="1.20.58.70">
    <property type="match status" value="1"/>
</dbReference>
<dbReference type="InterPro" id="IPR010989">
    <property type="entry name" value="SNARE"/>
</dbReference>
<dbReference type="InterPro" id="IPR045242">
    <property type="entry name" value="Syntaxin"/>
</dbReference>
<dbReference type="InterPro" id="IPR006012">
    <property type="entry name" value="Syntaxin/epimorphin_CS"/>
</dbReference>
<dbReference type="InterPro" id="IPR006011">
    <property type="entry name" value="Syntaxin_N"/>
</dbReference>
<dbReference type="InterPro" id="IPR000727">
    <property type="entry name" value="T_SNARE_dom"/>
</dbReference>
<dbReference type="PANTHER" id="PTHR19957:SF307">
    <property type="entry name" value="PROTEIN SSO1-RELATED"/>
    <property type="match status" value="1"/>
</dbReference>
<dbReference type="PANTHER" id="PTHR19957">
    <property type="entry name" value="SYNTAXIN"/>
    <property type="match status" value="1"/>
</dbReference>
<dbReference type="Pfam" id="PF05739">
    <property type="entry name" value="SNARE"/>
    <property type="match status" value="1"/>
</dbReference>
<dbReference type="Pfam" id="PF00804">
    <property type="entry name" value="Syntaxin"/>
    <property type="match status" value="1"/>
</dbReference>
<dbReference type="SMART" id="SM00503">
    <property type="entry name" value="SynN"/>
    <property type="match status" value="1"/>
</dbReference>
<dbReference type="SMART" id="SM00397">
    <property type="entry name" value="t_SNARE"/>
    <property type="match status" value="1"/>
</dbReference>
<dbReference type="SUPFAM" id="SSF47661">
    <property type="entry name" value="t-snare proteins"/>
    <property type="match status" value="1"/>
</dbReference>
<dbReference type="PROSITE" id="PS00914">
    <property type="entry name" value="SYNTAXIN"/>
    <property type="match status" value="1"/>
</dbReference>
<dbReference type="PROSITE" id="PS50192">
    <property type="entry name" value="T_SNARE"/>
    <property type="match status" value="1"/>
</dbReference>
<gene>
    <name type="primary">SSO1</name>
    <name type="ordered locus">YPL232W</name>
    <name type="ORF">P1405</name>
</gene>
<protein>
    <recommendedName>
        <fullName>Protein SSO1</fullName>
    </recommendedName>
</protein>
<feature type="chain" id="PRO_0000210274" description="Protein SSO1">
    <location>
        <begin position="1"/>
        <end position="290"/>
    </location>
</feature>
<feature type="topological domain" description="Cytoplasmic" evidence="1">
    <location>
        <begin position="1"/>
        <end position="265"/>
    </location>
</feature>
<feature type="transmembrane region" description="Helical; Anchor for type IV membrane protein" evidence="1">
    <location>
        <begin position="266"/>
        <end position="287"/>
    </location>
</feature>
<feature type="topological domain" description="Extracellular" evidence="1">
    <location>
        <begin position="288"/>
        <end position="290"/>
    </location>
</feature>
<feature type="domain" description="t-SNARE coiled-coil homology" evidence="2">
    <location>
        <begin position="190"/>
        <end position="252"/>
    </location>
</feature>
<feature type="sequence conflict" description="In Ref. 5; no nucleotide entry." evidence="4" ref="5">
    <original>E</original>
    <variation>G</variation>
    <location>
        <position position="97"/>
    </location>
</feature>
<feature type="sequence conflict" description="In Ref. 5; no nucleotide entry." evidence="4" ref="5">
    <original>G</original>
    <variation>V</variation>
    <location>
        <position position="105"/>
    </location>
</feature>
<feature type="helix" evidence="5">
    <location>
        <begin position="31"/>
        <end position="64"/>
    </location>
</feature>
<feature type="helix" evidence="5">
    <location>
        <begin position="70"/>
        <end position="104"/>
    </location>
</feature>
<feature type="turn" evidence="5">
    <location>
        <begin position="105"/>
        <end position="107"/>
    </location>
</feature>
<feature type="helix" evidence="5">
    <location>
        <begin position="109"/>
        <end position="151"/>
    </location>
</feature>
<feature type="helix" evidence="5">
    <location>
        <begin position="157"/>
        <end position="163"/>
    </location>
</feature>
<feature type="helix" evidence="5">
    <location>
        <begin position="166"/>
        <end position="176"/>
    </location>
</feature>
<feature type="helix" evidence="6">
    <location>
        <begin position="190"/>
        <end position="256"/>
    </location>
</feature>
<keyword id="KW-0002">3D-structure</keyword>
<keyword id="KW-0175">Coiled coil</keyword>
<keyword id="KW-0472">Membrane</keyword>
<keyword id="KW-1185">Reference proteome</keyword>
<keyword id="KW-0812">Transmembrane</keyword>
<keyword id="KW-1133">Transmembrane helix</keyword>